<evidence type="ECO:0000255" key="1">
    <source>
        <dbReference type="HAMAP-Rule" id="MF_04077"/>
    </source>
</evidence>
<evidence type="ECO:0000256" key="2">
    <source>
        <dbReference type="SAM" id="MobiDB-lite"/>
    </source>
</evidence>
<accession>Q9WC58</accession>
<keyword id="KW-0014">AIDS</keyword>
<keyword id="KW-1035">Host cytoplasm</keyword>
<keyword id="KW-1048">Host nucleus</keyword>
<keyword id="KW-0945">Host-virus interaction</keyword>
<keyword id="KW-0488">Methylation</keyword>
<keyword id="KW-0509">mRNA transport</keyword>
<keyword id="KW-0597">Phosphoprotein</keyword>
<keyword id="KW-0694">RNA-binding</keyword>
<keyword id="KW-0813">Transport</keyword>
<proteinExistence type="inferred from homology"/>
<comment type="function">
    <text evidence="1">Escorts unspliced or incompletely spliced viral pre-mRNAs (late transcripts) out of the nucleus of infected cells. These pre-mRNAs carry a recognition sequence called Rev responsive element (RRE) located in the env gene, that is not present in fully spliced viral mRNAs (early transcripts). This function is essential since most viral proteins are translated from unspliced or partially spliced pre-mRNAs which cannot exit the nucleus by the pathway used by fully processed cellular mRNAs. Rev itself is translated from a fully spliced mRNA that readily exits the nucleus. Rev's nuclear localization signal (NLS) binds directly to KPNB1/Importin beta-1 without previous binding to KPNA1/Importin alpha-1. KPNB1 binds to the GDP bound form of RAN (Ran-GDP) and targets Rev to the nucleus. In the nucleus, the conversion from Ran-GDP to Ran-GTP dissociates Rev from KPNB1 and allows Rev's binding to the RRE in viral pre-mRNAs. Rev multimerization on the RRE via cooperative assembly exposes its nuclear export signal (NES) to the surface. Rev can then form a complex with XPO1/CRM1 and Ran-GTP, leading to nuclear export of the complex. Conversion from Ran-GTP to Ran-GDP mediates dissociation of the Rev/RRE/XPO1/RAN complex, so that Rev can return to the nucleus for a subsequent round of export. Beside KPNB1, also seems to interact with TNPO1/Transportin-1, RANBP5/IPO5 and IPO7/RANBP7 for nuclear import. The nucleoporin-like HRB/RIP is an essential cofactor that probably indirectly interacts with Rev to release HIV RNAs from the perinuclear region to the cytoplasm.</text>
</comment>
<comment type="subunit">
    <text evidence="1">Homomultimer; when bound to the RRE. Multimeric assembly is essential for activity and may involve XPO1. Binds to human KPNB1, XPO1, TNPO1, RANBP5 and IPO7. Interacts with the viral Integrase. Interacts with human KHDRBS1. Interacts with human NAP1; this interaction decreases Rev multimerization and stimulates its activity. Interacts with human DEAD-box helicases DDX3 and DDX24; these interactions may serve for viral RNA export to the cytoplasm and packaging, respectively. Interacts with human PSIP1; this interaction may inhibit HIV-1 DNA integration by promoting dissociation of the Integrase-LEDGF/p75 complex.</text>
</comment>
<comment type="subcellular location">
    <subcellularLocation>
        <location evidence="1">Host nucleus</location>
        <location evidence="1">Host nucleolus</location>
    </subcellularLocation>
    <subcellularLocation>
        <location evidence="1">Host cytoplasm</location>
    </subcellularLocation>
    <text evidence="1">The presence of both nuclear import and nuclear export signals leads to continuous shuttling between the nucleus and cytoplasm.</text>
</comment>
<comment type="domain">
    <text evidence="1">The RNA-binding motif binds to the RRE, a 240 bp stem-and-loop structure present in incompletely spliced viral pre-mRNAs. This region also contains the NLS which mediates nuclear localization via KPNB1 binding and, when the N-terminal sequence is present, nucleolar targeting. These overlapping functions prevent Rev bound to RRE from undesirable return to the nucleus. When Rev binds the RRE, the NLS becomes masked while the NES remains accessible. The leucine-rich NES mediates binding to human XPO1.</text>
</comment>
<comment type="PTM">
    <text evidence="1">Asymmetrically arginine dimethylated at one site by host PRMT6. Methylation impairs the RNA-binding activity and export of viral RNA from the nucleus to the cytoplasm.</text>
</comment>
<comment type="PTM">
    <text evidence="1">Phosphorylated by protein kinase CK2. Presence of, and maybe binding to the N-terminus of the regulatory beta subunit of CK2 is necessary for CK2-mediated Rev's phosphorylation.</text>
</comment>
<comment type="miscellaneous">
    <text evidence="1">HIV-1 lineages are divided in three main groups, M (for Major), O (for Outlier), and N (for New, or Non-M, Non-O). The vast majority of strains found worldwide belong to the group M. Group O seems to be endemic to and largely confined to Cameroon and neighboring countries in West Central Africa, where these viruses represent a small minority of HIV-1 strains. The group N is represented by a limited number of isolates from Cameroonian persons. The group M is further subdivided in 9 clades or subtypes (A to D, F to H, J and K).</text>
</comment>
<comment type="similarity">
    <text evidence="1">Belongs to the HIV-1 REV protein family.</text>
</comment>
<gene>
    <name evidence="1" type="primary">rev</name>
</gene>
<organismHost>
    <name type="scientific">Homo sapiens</name>
    <name type="common">Human</name>
    <dbReference type="NCBI Taxonomy" id="9606"/>
</organismHost>
<name>REV_HV1S2</name>
<protein>
    <recommendedName>
        <fullName evidence="1">Protein Rev</fullName>
    </recommendedName>
    <alternativeName>
        <fullName evidence="1">ART/TRS</fullName>
    </alternativeName>
    <alternativeName>
        <fullName evidence="1">Anti-repression transactivator</fullName>
    </alternativeName>
    <alternativeName>
        <fullName evidence="1">Regulator of expression of viral proteins</fullName>
    </alternativeName>
</protein>
<organism>
    <name type="scientific">Human immunodeficiency virus type 1 group M subtype J (isolate SE9280)</name>
    <name type="common">HIV-1</name>
    <dbReference type="NCBI Taxonomy" id="388905"/>
    <lineage>
        <taxon>Viruses</taxon>
        <taxon>Riboviria</taxon>
        <taxon>Pararnavirae</taxon>
        <taxon>Artverviricota</taxon>
        <taxon>Revtraviricetes</taxon>
        <taxon>Ortervirales</taxon>
        <taxon>Retroviridae</taxon>
        <taxon>Orthoretrovirinae</taxon>
        <taxon>Lentivirus</taxon>
        <taxon>Human immunodeficiency virus type 1</taxon>
    </lineage>
</organism>
<feature type="chain" id="PRO_0000245005" description="Protein Rev">
    <location>
        <begin position="1"/>
        <end position="116"/>
    </location>
</feature>
<feature type="region of interest" description="Homomultimerization" evidence="1">
    <location>
        <begin position="18"/>
        <end position="26"/>
    </location>
</feature>
<feature type="region of interest" description="Disordered" evidence="2">
    <location>
        <begin position="26"/>
        <end position="50"/>
    </location>
</feature>
<feature type="region of interest" description="Disordered" evidence="2">
    <location>
        <begin position="91"/>
        <end position="116"/>
    </location>
</feature>
<feature type="short sequence motif" description="Nuclear localization signal and RNA-binding (RRE)" evidence="1">
    <location>
        <begin position="34"/>
        <end position="50"/>
    </location>
</feature>
<feature type="short sequence motif" description="Nuclear export signal and binding to XPO1" evidence="1">
    <location>
        <begin position="73"/>
        <end position="84"/>
    </location>
</feature>
<feature type="compositionally biased region" description="Basic residues" evidence="2">
    <location>
        <begin position="36"/>
        <end position="47"/>
    </location>
</feature>
<feature type="modified residue" description="Phosphoserine; by host CK2" evidence="1">
    <location>
        <position position="5"/>
    </location>
</feature>
<feature type="modified residue" description="Phosphoserine; by host CK2" evidence="1">
    <location>
        <position position="8"/>
    </location>
</feature>
<feature type="modified residue" description="Phosphoserine; by host" evidence="1">
    <location>
        <position position="92"/>
    </location>
</feature>
<dbReference type="EMBL" id="AF082394">
    <property type="protein sequence ID" value="AAD17764.1"/>
    <property type="molecule type" value="Genomic_DNA"/>
</dbReference>
<dbReference type="SMR" id="Q9WC58"/>
<dbReference type="Proteomes" id="UP000135310">
    <property type="component" value="Segment"/>
</dbReference>
<dbReference type="GO" id="GO:0030430">
    <property type="term" value="C:host cell cytoplasm"/>
    <property type="evidence" value="ECO:0007669"/>
    <property type="project" value="UniProtKB-SubCell"/>
</dbReference>
<dbReference type="GO" id="GO:0044196">
    <property type="term" value="C:host cell nucleolus"/>
    <property type="evidence" value="ECO:0007669"/>
    <property type="project" value="UniProtKB-SubCell"/>
</dbReference>
<dbReference type="GO" id="GO:0003700">
    <property type="term" value="F:DNA-binding transcription factor activity"/>
    <property type="evidence" value="ECO:0007669"/>
    <property type="project" value="UniProtKB-UniRule"/>
</dbReference>
<dbReference type="GO" id="GO:0003723">
    <property type="term" value="F:RNA binding"/>
    <property type="evidence" value="ECO:0007669"/>
    <property type="project" value="UniProtKB-UniRule"/>
</dbReference>
<dbReference type="GO" id="GO:0051028">
    <property type="term" value="P:mRNA transport"/>
    <property type="evidence" value="ECO:0007669"/>
    <property type="project" value="UniProtKB-UniRule"/>
</dbReference>
<dbReference type="GO" id="GO:0016032">
    <property type="term" value="P:viral process"/>
    <property type="evidence" value="ECO:0007669"/>
    <property type="project" value="UniProtKB-UniRule"/>
</dbReference>
<dbReference type="Gene3D" id="6.10.140.630">
    <property type="match status" value="1"/>
</dbReference>
<dbReference type="HAMAP" id="MF_04077">
    <property type="entry name" value="REV_HIV1"/>
    <property type="match status" value="1"/>
</dbReference>
<dbReference type="InterPro" id="IPR000625">
    <property type="entry name" value="REV_protein"/>
</dbReference>
<dbReference type="Pfam" id="PF00424">
    <property type="entry name" value="REV"/>
    <property type="match status" value="1"/>
</dbReference>
<sequence>MAGRSGDSDDQLLLAVRLIKILYQSNPYPKPNGSRQARRNRRRRWRARQNQIDSISERIPSSCLGRPAEPVPLQLPPIERLRLDCSEDCGNSGTQGVGDPQISGEPCMVLGAGTKE</sequence>
<reference key="1">
    <citation type="journal article" date="1999" name="AIDS Res. Hum. Retroviruses">
        <title>Virtually full-length sequences of HIV type 1 subtype J reference strains.</title>
        <authorList>
            <person name="Laukkanen T."/>
            <person name="Albert J."/>
            <person name="Liitsola K."/>
            <person name="Green S.D."/>
            <person name="Carr J.K."/>
            <person name="Leitner T."/>
            <person name="McCutchan F.E."/>
            <person name="Salminen M.O."/>
        </authorList>
    </citation>
    <scope>NUCLEOTIDE SEQUENCE [GENOMIC DNA]</scope>
    <source>
        <strain>SE9280</strain>
    </source>
</reference>
<reference key="2">
    <citation type="journal article" date="1999" name="Arch. Biochem. Biophys.">
        <title>The ins and outs of HIV Rev.</title>
        <authorList>
            <person name="Hope T.J."/>
        </authorList>
    </citation>
    <scope>REVIEW</scope>
</reference>